<dbReference type="EMBL" id="DQ643392">
    <property type="protein sequence ID" value="ABF82130.1"/>
    <property type="molecule type" value="Genomic_DNA"/>
</dbReference>
<dbReference type="RefSeq" id="YP_654672.1">
    <property type="nucleotide sequence ID" value="NC_008187.1"/>
</dbReference>
<dbReference type="KEGG" id="vg:4156244"/>
<dbReference type="OrthoDB" id="15540at10239"/>
<dbReference type="Proteomes" id="UP000001358">
    <property type="component" value="Genome"/>
</dbReference>
<reference key="1">
    <citation type="journal article" date="2006" name="J. Virol.">
        <title>Genome of invertebrate iridescent virus type 3 (mosquito iridescent virus).</title>
        <authorList>
            <person name="Delhon G."/>
            <person name="Tulman E.R."/>
            <person name="Afonso C.L."/>
            <person name="Lu Z."/>
            <person name="Becnel J.J."/>
            <person name="Moser B.A."/>
            <person name="Kutish G.F."/>
            <person name="Rock D.L."/>
        </authorList>
    </citation>
    <scope>NUCLEOTIDE SEQUENCE [LARGE SCALE GENOMIC DNA]</scope>
</reference>
<gene>
    <name type="ORF">IIV3-100L</name>
</gene>
<evidence type="ECO:0000256" key="1">
    <source>
        <dbReference type="SAM" id="MobiDB-lite"/>
    </source>
</evidence>
<evidence type="ECO:0000305" key="2"/>
<name>VF378_IIV3</name>
<comment type="similarity">
    <text evidence="2">Belongs to the IIV-6 378R family.</text>
</comment>
<accession>Q196W0</accession>
<feature type="chain" id="PRO_0000377791" description="Uncharacterized protein 100L">
    <location>
        <begin position="1"/>
        <end position="212"/>
    </location>
</feature>
<feature type="region of interest" description="Disordered" evidence="1">
    <location>
        <begin position="42"/>
        <end position="101"/>
    </location>
</feature>
<feature type="compositionally biased region" description="Low complexity" evidence="1">
    <location>
        <begin position="58"/>
        <end position="91"/>
    </location>
</feature>
<proteinExistence type="inferred from homology"/>
<keyword id="KW-1185">Reference proteome</keyword>
<organism>
    <name type="scientific">Invertebrate iridescent virus 3</name>
    <name type="common">IIV-3</name>
    <name type="synonym">Mosquito iridescent virus</name>
    <dbReference type="NCBI Taxonomy" id="345201"/>
    <lineage>
        <taxon>Viruses</taxon>
        <taxon>Varidnaviria</taxon>
        <taxon>Bamfordvirae</taxon>
        <taxon>Nucleocytoviricota</taxon>
        <taxon>Megaviricetes</taxon>
        <taxon>Pimascovirales</taxon>
        <taxon>Iridoviridae</taxon>
        <taxon>Betairidovirinae</taxon>
        <taxon>Chloriridovirus</taxon>
    </lineage>
</organism>
<organismHost>
    <name type="scientific">Aedes vexans</name>
    <name type="common">Inland floodwater mosquito</name>
    <name type="synonym">Culex vexans</name>
    <dbReference type="NCBI Taxonomy" id="7163"/>
</organismHost>
<organismHost>
    <name type="scientific">Culex territans</name>
    <dbReference type="NCBI Taxonomy" id="42431"/>
</organismHost>
<organismHost>
    <name type="scientific">Culiseta annulata</name>
    <dbReference type="NCBI Taxonomy" id="332058"/>
</organismHost>
<organismHost>
    <name type="scientific">Ochlerotatus sollicitans</name>
    <name type="common">eastern saltmarsh mosquito</name>
    <dbReference type="NCBI Taxonomy" id="310513"/>
</organismHost>
<organismHost>
    <name type="scientific">Ochlerotatus taeniorhynchus</name>
    <name type="common">Black salt marsh mosquito</name>
    <name type="synonym">Aedes taeniorhynchus</name>
    <dbReference type="NCBI Taxonomy" id="329105"/>
</organismHost>
<organismHost>
    <name type="scientific">Psorophora ferox</name>
    <dbReference type="NCBI Taxonomy" id="7183"/>
</organismHost>
<protein>
    <recommendedName>
        <fullName>Uncharacterized protein 100L</fullName>
    </recommendedName>
</protein>
<sequence>MNDVHDCLVWVNDPYFHPISKRPIKYKGPTWRHYDKKCDLLGITGPKATKSPSRRTTRSPSPSRRTTRSSPSRRTTRSSPSRRTTRSPSPSGRRKQGGPAVYCGNNALDEGLLDGSKVVGTRYQCLQKGVAVGLNNPVLHHSPNYQPIVDAKIYCGTGSKLPASKLRFGTPTECMGKGYQIGQNKRFQQSGLQQGPYIWEEDGWYKIIVPKN</sequence>